<sequence length="434" mass="47117">MPIITDVYAREVLDSRGNPTVEVEVLTESGAFGRALVPSGASTGEHEAVELRDGDKSRYLGKGVTKAVENVNEIIAPEIIEGEFSVLDQVSIDKMMIALDGTPNKGKLGANAILGVSIAVARAAADLLGQPLYKYLGGFNGKQLPVPMMNIVNGGSHSDAPIAFQEFMILPVGATTFKESLRWGTEIFHNLKSILSKRGLETAVGDEGGFAPKFEGTEDAVETIIQAIEAAGYKPGEEVFLGFDCASSEFYENGVYDYSKFEGEHGAKRTAAEQVDYLEQLVDKYPIITIEDGMDENDWDGWKQLTERIGDRVQLVGDDLFVTNTEILAKGIENGIGNSILIKVNQIGTLTETFDAIEMAQKAGYTAVVSHRSGETEDTTIADIAVATNAGQIKTGSLSRTDRIAKYNQLLRIEDELFETAKYDGIKSFYNLDK</sequence>
<keyword id="KW-0963">Cytoplasm</keyword>
<keyword id="KW-0324">Glycolysis</keyword>
<keyword id="KW-0456">Lyase</keyword>
<keyword id="KW-0460">Magnesium</keyword>
<keyword id="KW-0479">Metal-binding</keyword>
<keyword id="KW-0964">Secreted</keyword>
<gene>
    <name evidence="1" type="primary">eno</name>
    <name type="ordered locus">SaurJH9_0801</name>
</gene>
<organism>
    <name type="scientific">Staphylococcus aureus (strain JH9)</name>
    <dbReference type="NCBI Taxonomy" id="359786"/>
    <lineage>
        <taxon>Bacteria</taxon>
        <taxon>Bacillati</taxon>
        <taxon>Bacillota</taxon>
        <taxon>Bacilli</taxon>
        <taxon>Bacillales</taxon>
        <taxon>Staphylococcaceae</taxon>
        <taxon>Staphylococcus</taxon>
    </lineage>
</organism>
<reference key="1">
    <citation type="submission" date="2007-05" db="EMBL/GenBank/DDBJ databases">
        <title>Complete sequence of chromosome of Staphylococcus aureus subsp. aureus JH9.</title>
        <authorList>
            <consortium name="US DOE Joint Genome Institute"/>
            <person name="Copeland A."/>
            <person name="Lucas S."/>
            <person name="Lapidus A."/>
            <person name="Barry K."/>
            <person name="Detter J.C."/>
            <person name="Glavina del Rio T."/>
            <person name="Hammon N."/>
            <person name="Israni S."/>
            <person name="Pitluck S."/>
            <person name="Chain P."/>
            <person name="Malfatti S."/>
            <person name="Shin M."/>
            <person name="Vergez L."/>
            <person name="Schmutz J."/>
            <person name="Larimer F."/>
            <person name="Land M."/>
            <person name="Hauser L."/>
            <person name="Kyrpides N."/>
            <person name="Kim E."/>
            <person name="Tomasz A."/>
            <person name="Richardson P."/>
        </authorList>
    </citation>
    <scope>NUCLEOTIDE SEQUENCE [LARGE SCALE GENOMIC DNA]</scope>
    <source>
        <strain>JH9</strain>
    </source>
</reference>
<accession>A5IQY0</accession>
<proteinExistence type="inferred from homology"/>
<protein>
    <recommendedName>
        <fullName evidence="1">Enolase</fullName>
        <ecNumber evidence="1">4.2.1.11</ecNumber>
    </recommendedName>
    <alternativeName>
        <fullName evidence="1">2-phospho-D-glycerate hydro-lyase</fullName>
    </alternativeName>
    <alternativeName>
        <fullName evidence="1">2-phosphoglycerate dehydratase</fullName>
    </alternativeName>
</protein>
<evidence type="ECO:0000255" key="1">
    <source>
        <dbReference type="HAMAP-Rule" id="MF_00318"/>
    </source>
</evidence>
<comment type="function">
    <text evidence="1">Catalyzes the reversible conversion of 2-phosphoglycerate (2-PG) into phosphoenolpyruvate (PEP). It is essential for the degradation of carbohydrates via glycolysis.</text>
</comment>
<comment type="catalytic activity">
    <reaction evidence="1">
        <text>(2R)-2-phosphoglycerate = phosphoenolpyruvate + H2O</text>
        <dbReference type="Rhea" id="RHEA:10164"/>
        <dbReference type="ChEBI" id="CHEBI:15377"/>
        <dbReference type="ChEBI" id="CHEBI:58289"/>
        <dbReference type="ChEBI" id="CHEBI:58702"/>
        <dbReference type="EC" id="4.2.1.11"/>
    </reaction>
</comment>
<comment type="cofactor">
    <cofactor evidence="1">
        <name>Mg(2+)</name>
        <dbReference type="ChEBI" id="CHEBI:18420"/>
    </cofactor>
    <text evidence="1">Binds a second Mg(2+) ion via substrate during catalysis.</text>
</comment>
<comment type="pathway">
    <text evidence="1">Carbohydrate degradation; glycolysis; pyruvate from D-glyceraldehyde 3-phosphate: step 4/5.</text>
</comment>
<comment type="subcellular location">
    <subcellularLocation>
        <location evidence="1">Cytoplasm</location>
    </subcellularLocation>
    <subcellularLocation>
        <location evidence="1">Secreted</location>
    </subcellularLocation>
    <subcellularLocation>
        <location evidence="1">Cell surface</location>
    </subcellularLocation>
    <text evidence="1">Fractions of enolase are present in both the cytoplasm and on the cell surface.</text>
</comment>
<comment type="similarity">
    <text evidence="1">Belongs to the enolase family.</text>
</comment>
<feature type="chain" id="PRO_1000079156" description="Enolase">
    <location>
        <begin position="1"/>
        <end position="434"/>
    </location>
</feature>
<feature type="active site" description="Proton donor" evidence="1">
    <location>
        <position position="207"/>
    </location>
</feature>
<feature type="active site" description="Proton acceptor" evidence="1">
    <location>
        <position position="343"/>
    </location>
</feature>
<feature type="binding site" evidence="1">
    <location>
        <position position="165"/>
    </location>
    <ligand>
        <name>(2R)-2-phosphoglycerate</name>
        <dbReference type="ChEBI" id="CHEBI:58289"/>
    </ligand>
</feature>
<feature type="binding site" evidence="1">
    <location>
        <position position="244"/>
    </location>
    <ligand>
        <name>Mg(2+)</name>
        <dbReference type="ChEBI" id="CHEBI:18420"/>
    </ligand>
</feature>
<feature type="binding site" evidence="1">
    <location>
        <position position="291"/>
    </location>
    <ligand>
        <name>Mg(2+)</name>
        <dbReference type="ChEBI" id="CHEBI:18420"/>
    </ligand>
</feature>
<feature type="binding site" evidence="1">
    <location>
        <position position="318"/>
    </location>
    <ligand>
        <name>Mg(2+)</name>
        <dbReference type="ChEBI" id="CHEBI:18420"/>
    </ligand>
</feature>
<feature type="binding site" evidence="1">
    <location>
        <position position="343"/>
    </location>
    <ligand>
        <name>(2R)-2-phosphoglycerate</name>
        <dbReference type="ChEBI" id="CHEBI:58289"/>
    </ligand>
</feature>
<feature type="binding site" evidence="1">
    <location>
        <position position="372"/>
    </location>
    <ligand>
        <name>(2R)-2-phosphoglycerate</name>
        <dbReference type="ChEBI" id="CHEBI:58289"/>
    </ligand>
</feature>
<feature type="binding site" evidence="1">
    <location>
        <position position="373"/>
    </location>
    <ligand>
        <name>(2R)-2-phosphoglycerate</name>
        <dbReference type="ChEBI" id="CHEBI:58289"/>
    </ligand>
</feature>
<feature type="binding site" evidence="1">
    <location>
        <position position="394"/>
    </location>
    <ligand>
        <name>(2R)-2-phosphoglycerate</name>
        <dbReference type="ChEBI" id="CHEBI:58289"/>
    </ligand>
</feature>
<name>ENO_STAA9</name>
<dbReference type="EC" id="4.2.1.11" evidence="1"/>
<dbReference type="EMBL" id="CP000703">
    <property type="protein sequence ID" value="ABQ48603.1"/>
    <property type="molecule type" value="Genomic_DNA"/>
</dbReference>
<dbReference type="RefSeq" id="WP_001121760.1">
    <property type="nucleotide sequence ID" value="NC_009487.1"/>
</dbReference>
<dbReference type="SMR" id="A5IQY0"/>
<dbReference type="KEGG" id="saj:SaurJH9_0801"/>
<dbReference type="HOGENOM" id="CLU_031223_2_1_9"/>
<dbReference type="UniPathway" id="UPA00109">
    <property type="reaction ID" value="UER00187"/>
</dbReference>
<dbReference type="GO" id="GO:0009986">
    <property type="term" value="C:cell surface"/>
    <property type="evidence" value="ECO:0007669"/>
    <property type="project" value="UniProtKB-SubCell"/>
</dbReference>
<dbReference type="GO" id="GO:0005576">
    <property type="term" value="C:extracellular region"/>
    <property type="evidence" value="ECO:0007669"/>
    <property type="project" value="UniProtKB-SubCell"/>
</dbReference>
<dbReference type="GO" id="GO:0000015">
    <property type="term" value="C:phosphopyruvate hydratase complex"/>
    <property type="evidence" value="ECO:0007669"/>
    <property type="project" value="InterPro"/>
</dbReference>
<dbReference type="GO" id="GO:0000287">
    <property type="term" value="F:magnesium ion binding"/>
    <property type="evidence" value="ECO:0007669"/>
    <property type="project" value="UniProtKB-UniRule"/>
</dbReference>
<dbReference type="GO" id="GO:0004634">
    <property type="term" value="F:phosphopyruvate hydratase activity"/>
    <property type="evidence" value="ECO:0007669"/>
    <property type="project" value="UniProtKB-UniRule"/>
</dbReference>
<dbReference type="GO" id="GO:0006096">
    <property type="term" value="P:glycolytic process"/>
    <property type="evidence" value="ECO:0007669"/>
    <property type="project" value="UniProtKB-UniRule"/>
</dbReference>
<dbReference type="CDD" id="cd03313">
    <property type="entry name" value="enolase"/>
    <property type="match status" value="1"/>
</dbReference>
<dbReference type="FunFam" id="3.20.20.120:FF:000001">
    <property type="entry name" value="Enolase"/>
    <property type="match status" value="1"/>
</dbReference>
<dbReference type="FunFam" id="3.30.390.10:FF:000001">
    <property type="entry name" value="Enolase"/>
    <property type="match status" value="1"/>
</dbReference>
<dbReference type="Gene3D" id="3.20.20.120">
    <property type="entry name" value="Enolase-like C-terminal domain"/>
    <property type="match status" value="1"/>
</dbReference>
<dbReference type="Gene3D" id="3.30.390.10">
    <property type="entry name" value="Enolase-like, N-terminal domain"/>
    <property type="match status" value="1"/>
</dbReference>
<dbReference type="HAMAP" id="MF_00318">
    <property type="entry name" value="Enolase"/>
    <property type="match status" value="1"/>
</dbReference>
<dbReference type="InterPro" id="IPR000941">
    <property type="entry name" value="Enolase"/>
</dbReference>
<dbReference type="InterPro" id="IPR036849">
    <property type="entry name" value="Enolase-like_C_sf"/>
</dbReference>
<dbReference type="InterPro" id="IPR029017">
    <property type="entry name" value="Enolase-like_N"/>
</dbReference>
<dbReference type="InterPro" id="IPR020810">
    <property type="entry name" value="Enolase_C"/>
</dbReference>
<dbReference type="InterPro" id="IPR020809">
    <property type="entry name" value="Enolase_CS"/>
</dbReference>
<dbReference type="InterPro" id="IPR020811">
    <property type="entry name" value="Enolase_N"/>
</dbReference>
<dbReference type="NCBIfam" id="TIGR01060">
    <property type="entry name" value="eno"/>
    <property type="match status" value="1"/>
</dbReference>
<dbReference type="PANTHER" id="PTHR11902">
    <property type="entry name" value="ENOLASE"/>
    <property type="match status" value="1"/>
</dbReference>
<dbReference type="PANTHER" id="PTHR11902:SF1">
    <property type="entry name" value="ENOLASE"/>
    <property type="match status" value="1"/>
</dbReference>
<dbReference type="Pfam" id="PF00113">
    <property type="entry name" value="Enolase_C"/>
    <property type="match status" value="1"/>
</dbReference>
<dbReference type="Pfam" id="PF03952">
    <property type="entry name" value="Enolase_N"/>
    <property type="match status" value="1"/>
</dbReference>
<dbReference type="PIRSF" id="PIRSF001400">
    <property type="entry name" value="Enolase"/>
    <property type="match status" value="1"/>
</dbReference>
<dbReference type="PRINTS" id="PR00148">
    <property type="entry name" value="ENOLASE"/>
</dbReference>
<dbReference type="SFLD" id="SFLDF00002">
    <property type="entry name" value="enolase"/>
    <property type="match status" value="1"/>
</dbReference>
<dbReference type="SFLD" id="SFLDG00178">
    <property type="entry name" value="enolase"/>
    <property type="match status" value="1"/>
</dbReference>
<dbReference type="SMART" id="SM01192">
    <property type="entry name" value="Enolase_C"/>
    <property type="match status" value="1"/>
</dbReference>
<dbReference type="SMART" id="SM01193">
    <property type="entry name" value="Enolase_N"/>
    <property type="match status" value="1"/>
</dbReference>
<dbReference type="SUPFAM" id="SSF51604">
    <property type="entry name" value="Enolase C-terminal domain-like"/>
    <property type="match status" value="1"/>
</dbReference>
<dbReference type="SUPFAM" id="SSF54826">
    <property type="entry name" value="Enolase N-terminal domain-like"/>
    <property type="match status" value="1"/>
</dbReference>
<dbReference type="PROSITE" id="PS00164">
    <property type="entry name" value="ENOLASE"/>
    <property type="match status" value="1"/>
</dbReference>